<reference key="1">
    <citation type="submission" date="2006-10" db="EMBL/GenBank/DDBJ databases">
        <title>Complete sequence of Syntrophobacter fumaroxidans MPOB.</title>
        <authorList>
            <consortium name="US DOE Joint Genome Institute"/>
            <person name="Copeland A."/>
            <person name="Lucas S."/>
            <person name="Lapidus A."/>
            <person name="Barry K."/>
            <person name="Detter J.C."/>
            <person name="Glavina del Rio T."/>
            <person name="Hammon N."/>
            <person name="Israni S."/>
            <person name="Pitluck S."/>
            <person name="Goltsman E.G."/>
            <person name="Martinez M."/>
            <person name="Schmutz J."/>
            <person name="Larimer F."/>
            <person name="Land M."/>
            <person name="Hauser L."/>
            <person name="Kyrpides N."/>
            <person name="Kim E."/>
            <person name="Boone D.R."/>
            <person name="Brockman F."/>
            <person name="Culley D."/>
            <person name="Ferry J."/>
            <person name="Gunsalus R."/>
            <person name="McInerney M.J."/>
            <person name="Morrison M."/>
            <person name="Plugge C."/>
            <person name="Rohlin L."/>
            <person name="Scholten J."/>
            <person name="Sieber J."/>
            <person name="Stams A.J.M."/>
            <person name="Worm P."/>
            <person name="Henstra A.M."/>
            <person name="Richardson P."/>
        </authorList>
    </citation>
    <scope>NUCLEOTIDE SEQUENCE [LARGE SCALE GENOMIC DNA]</scope>
    <source>
        <strain>DSM 10017 / MPOB</strain>
    </source>
</reference>
<comment type="function">
    <text evidence="1">Nucleotidase that shows phosphatase activity on nucleoside 5'-monophosphates.</text>
</comment>
<comment type="catalytic activity">
    <reaction evidence="1">
        <text>a ribonucleoside 5'-phosphate + H2O = a ribonucleoside + phosphate</text>
        <dbReference type="Rhea" id="RHEA:12484"/>
        <dbReference type="ChEBI" id="CHEBI:15377"/>
        <dbReference type="ChEBI" id="CHEBI:18254"/>
        <dbReference type="ChEBI" id="CHEBI:43474"/>
        <dbReference type="ChEBI" id="CHEBI:58043"/>
        <dbReference type="EC" id="3.1.3.5"/>
    </reaction>
</comment>
<comment type="cofactor">
    <cofactor evidence="1">
        <name>a divalent metal cation</name>
        <dbReference type="ChEBI" id="CHEBI:60240"/>
    </cofactor>
    <text evidence="1">Binds 1 divalent metal cation per subunit.</text>
</comment>
<comment type="subcellular location">
    <subcellularLocation>
        <location evidence="1">Cytoplasm</location>
    </subcellularLocation>
</comment>
<comment type="similarity">
    <text evidence="1">Belongs to the SurE nucleotidase family.</text>
</comment>
<name>SURE_SYNFM</name>
<organism>
    <name type="scientific">Syntrophobacter fumaroxidans (strain DSM 10017 / MPOB)</name>
    <dbReference type="NCBI Taxonomy" id="335543"/>
    <lineage>
        <taxon>Bacteria</taxon>
        <taxon>Pseudomonadati</taxon>
        <taxon>Thermodesulfobacteriota</taxon>
        <taxon>Syntrophobacteria</taxon>
        <taxon>Syntrophobacterales</taxon>
        <taxon>Syntrophobacteraceae</taxon>
        <taxon>Syntrophobacter</taxon>
    </lineage>
</organism>
<accession>A0LHG0</accession>
<gene>
    <name evidence="1" type="primary">surE</name>
    <name type="ordered locus">Sfum_1169</name>
</gene>
<evidence type="ECO:0000255" key="1">
    <source>
        <dbReference type="HAMAP-Rule" id="MF_00060"/>
    </source>
</evidence>
<protein>
    <recommendedName>
        <fullName evidence="1">5'-nucleotidase SurE</fullName>
        <ecNumber evidence="1">3.1.3.5</ecNumber>
    </recommendedName>
    <alternativeName>
        <fullName evidence="1">Nucleoside 5'-monophosphate phosphohydrolase</fullName>
    </alternativeName>
</protein>
<sequence>MRILLTNDDGVYAKGIETLYLALIEEHDVTVVAPETEQSAVGHAITWLDPLRVKPVHRNGHFFGHALTGTPADCVKIAVAELMSPPPDMVVSGVNMGANVGVNVIYSGTVSAATEAAVMGIPSMAVSIDSFQPTDFSAVTEFVPRLLRIVAKEGLPPGVCLNVNVPNLPADRIRGVKVTRQGHMKMVERYDRRIDPRGHVYYWLTNSALLRDDDPATDSLALARDYISVTPIHHDLTHYEMIDTLGKWNL</sequence>
<proteinExistence type="inferred from homology"/>
<dbReference type="EC" id="3.1.3.5" evidence="1"/>
<dbReference type="EMBL" id="CP000478">
    <property type="protein sequence ID" value="ABK16862.1"/>
    <property type="molecule type" value="Genomic_DNA"/>
</dbReference>
<dbReference type="RefSeq" id="WP_011698033.1">
    <property type="nucleotide sequence ID" value="NC_008554.1"/>
</dbReference>
<dbReference type="SMR" id="A0LHG0"/>
<dbReference type="FunCoup" id="A0LHG0">
    <property type="interactions" value="201"/>
</dbReference>
<dbReference type="STRING" id="335543.Sfum_1169"/>
<dbReference type="KEGG" id="sfu:Sfum_1169"/>
<dbReference type="eggNOG" id="COG0496">
    <property type="taxonomic scope" value="Bacteria"/>
</dbReference>
<dbReference type="HOGENOM" id="CLU_045192_1_3_7"/>
<dbReference type="InParanoid" id="A0LHG0"/>
<dbReference type="OrthoDB" id="9780815at2"/>
<dbReference type="Proteomes" id="UP000001784">
    <property type="component" value="Chromosome"/>
</dbReference>
<dbReference type="GO" id="GO:0005737">
    <property type="term" value="C:cytoplasm"/>
    <property type="evidence" value="ECO:0007669"/>
    <property type="project" value="UniProtKB-SubCell"/>
</dbReference>
<dbReference type="GO" id="GO:0008253">
    <property type="term" value="F:5'-nucleotidase activity"/>
    <property type="evidence" value="ECO:0007669"/>
    <property type="project" value="UniProtKB-UniRule"/>
</dbReference>
<dbReference type="GO" id="GO:0046872">
    <property type="term" value="F:metal ion binding"/>
    <property type="evidence" value="ECO:0007669"/>
    <property type="project" value="UniProtKB-UniRule"/>
</dbReference>
<dbReference type="GO" id="GO:0000166">
    <property type="term" value="F:nucleotide binding"/>
    <property type="evidence" value="ECO:0007669"/>
    <property type="project" value="UniProtKB-KW"/>
</dbReference>
<dbReference type="FunFam" id="3.40.1210.10:FF:000001">
    <property type="entry name" value="5'/3'-nucleotidase SurE"/>
    <property type="match status" value="1"/>
</dbReference>
<dbReference type="Gene3D" id="3.40.1210.10">
    <property type="entry name" value="Survival protein SurE-like phosphatase/nucleotidase"/>
    <property type="match status" value="1"/>
</dbReference>
<dbReference type="HAMAP" id="MF_00060">
    <property type="entry name" value="SurE"/>
    <property type="match status" value="1"/>
</dbReference>
<dbReference type="InterPro" id="IPR030048">
    <property type="entry name" value="SurE"/>
</dbReference>
<dbReference type="InterPro" id="IPR002828">
    <property type="entry name" value="SurE-like_Pase/nucleotidase"/>
</dbReference>
<dbReference type="InterPro" id="IPR036523">
    <property type="entry name" value="SurE-like_sf"/>
</dbReference>
<dbReference type="NCBIfam" id="NF001490">
    <property type="entry name" value="PRK00346.1-4"/>
    <property type="match status" value="1"/>
</dbReference>
<dbReference type="NCBIfam" id="NF001492">
    <property type="entry name" value="PRK00346.2-2"/>
    <property type="match status" value="1"/>
</dbReference>
<dbReference type="NCBIfam" id="TIGR00087">
    <property type="entry name" value="surE"/>
    <property type="match status" value="1"/>
</dbReference>
<dbReference type="PANTHER" id="PTHR30457">
    <property type="entry name" value="5'-NUCLEOTIDASE SURE"/>
    <property type="match status" value="1"/>
</dbReference>
<dbReference type="PANTHER" id="PTHR30457:SF0">
    <property type="entry name" value="PHOSPHATASE, PUTATIVE (AFU_ORTHOLOGUE AFUA_4G01070)-RELATED"/>
    <property type="match status" value="1"/>
</dbReference>
<dbReference type="Pfam" id="PF01975">
    <property type="entry name" value="SurE"/>
    <property type="match status" value="1"/>
</dbReference>
<dbReference type="SUPFAM" id="SSF64167">
    <property type="entry name" value="SurE-like"/>
    <property type="match status" value="1"/>
</dbReference>
<keyword id="KW-0963">Cytoplasm</keyword>
<keyword id="KW-0378">Hydrolase</keyword>
<keyword id="KW-0479">Metal-binding</keyword>
<keyword id="KW-0547">Nucleotide-binding</keyword>
<keyword id="KW-1185">Reference proteome</keyword>
<feature type="chain" id="PRO_1000007792" description="5'-nucleotidase SurE">
    <location>
        <begin position="1"/>
        <end position="250"/>
    </location>
</feature>
<feature type="binding site" evidence="1">
    <location>
        <position position="8"/>
    </location>
    <ligand>
        <name>a divalent metal cation</name>
        <dbReference type="ChEBI" id="CHEBI:60240"/>
    </ligand>
</feature>
<feature type="binding site" evidence="1">
    <location>
        <position position="9"/>
    </location>
    <ligand>
        <name>a divalent metal cation</name>
        <dbReference type="ChEBI" id="CHEBI:60240"/>
    </ligand>
</feature>
<feature type="binding site" evidence="1">
    <location>
        <position position="39"/>
    </location>
    <ligand>
        <name>a divalent metal cation</name>
        <dbReference type="ChEBI" id="CHEBI:60240"/>
    </ligand>
</feature>
<feature type="binding site" evidence="1">
    <location>
        <position position="95"/>
    </location>
    <ligand>
        <name>a divalent metal cation</name>
        <dbReference type="ChEBI" id="CHEBI:60240"/>
    </ligand>
</feature>